<protein>
    <recommendedName>
        <fullName evidence="1">Exodeoxyribonuclease 7 large subunit</fullName>
        <ecNumber evidence="1">3.1.11.6</ecNumber>
    </recommendedName>
    <alternativeName>
        <fullName evidence="1">Exodeoxyribonuclease VII large subunit</fullName>
        <shortName evidence="1">Exonuclease VII large subunit</shortName>
    </alternativeName>
</protein>
<reference key="1">
    <citation type="submission" date="2006-09" db="EMBL/GenBank/DDBJ databases">
        <title>Complete sequence of chromosome 1 of Shewanella sp. ANA-3.</title>
        <authorList>
            <person name="Copeland A."/>
            <person name="Lucas S."/>
            <person name="Lapidus A."/>
            <person name="Barry K."/>
            <person name="Detter J.C."/>
            <person name="Glavina del Rio T."/>
            <person name="Hammon N."/>
            <person name="Israni S."/>
            <person name="Dalin E."/>
            <person name="Tice H."/>
            <person name="Pitluck S."/>
            <person name="Chertkov O."/>
            <person name="Brettin T."/>
            <person name="Bruce D."/>
            <person name="Han C."/>
            <person name="Tapia R."/>
            <person name="Gilna P."/>
            <person name="Schmutz J."/>
            <person name="Larimer F."/>
            <person name="Land M."/>
            <person name="Hauser L."/>
            <person name="Kyrpides N."/>
            <person name="Kim E."/>
            <person name="Newman D."/>
            <person name="Salticov C."/>
            <person name="Konstantinidis K."/>
            <person name="Klappenback J."/>
            <person name="Tiedje J."/>
            <person name="Richardson P."/>
        </authorList>
    </citation>
    <scope>NUCLEOTIDE SEQUENCE [LARGE SCALE GENOMIC DNA]</scope>
    <source>
        <strain>ANA-3</strain>
    </source>
</reference>
<sequence length="448" mass="49982">MQVPKNNIYTVSRLNGEVRQILEGQLGKVWLNGEISNFSAPSSGHWYLTLKDHYSQIRCAMFKGRNQSVSFKPVNGQQVLVKGAISVYEPRGDYQLLIESMLPAGDGLLAQQFEALKMKLAAQGLFAADTKRQLPKNIQRIGVITSPTGAAIRDVLHVLARRDPSIEVIIYPTQVQGENADMNICQAINIANQRLEVDVLLLTRGGGSLEDLWCFNSEALAHTIYNSALPVVSAVGHEVDTTISDYVADVRAPTPSAGAELLSQDSDNKSQRLATVLSRLKQSASHYQLKQEKRLSLLEHRLQRLDPKRTLQQFEQRFDEMQLRLEAALSNKLHGLSRRQQQLANRLEQQSPKHKLALETNRLSYLATRLQDAMQDTLNQSEQRITYAAHQLETVSPLATLSRGYSITTDANNQVIDNAAQLSVGDKINTRLRHGQVQSTVTQITDES</sequence>
<evidence type="ECO:0000255" key="1">
    <source>
        <dbReference type="HAMAP-Rule" id="MF_00378"/>
    </source>
</evidence>
<organism>
    <name type="scientific">Shewanella sp. (strain ANA-3)</name>
    <dbReference type="NCBI Taxonomy" id="94122"/>
    <lineage>
        <taxon>Bacteria</taxon>
        <taxon>Pseudomonadati</taxon>
        <taxon>Pseudomonadota</taxon>
        <taxon>Gammaproteobacteria</taxon>
        <taxon>Alteromonadales</taxon>
        <taxon>Shewanellaceae</taxon>
        <taxon>Shewanella</taxon>
    </lineage>
</organism>
<gene>
    <name evidence="1" type="primary">xseA</name>
    <name type="ordered locus">Shewana3_1234</name>
</gene>
<comment type="function">
    <text evidence="1">Bidirectionally degrades single-stranded DNA into large acid-insoluble oligonucleotides, which are then degraded further into small acid-soluble oligonucleotides.</text>
</comment>
<comment type="catalytic activity">
    <reaction evidence="1">
        <text>Exonucleolytic cleavage in either 5'- to 3'- or 3'- to 5'-direction to yield nucleoside 5'-phosphates.</text>
        <dbReference type="EC" id="3.1.11.6"/>
    </reaction>
</comment>
<comment type="subunit">
    <text evidence="1">Heterooligomer composed of large and small subunits.</text>
</comment>
<comment type="subcellular location">
    <subcellularLocation>
        <location evidence="1">Cytoplasm</location>
    </subcellularLocation>
</comment>
<comment type="similarity">
    <text evidence="1">Belongs to the XseA family.</text>
</comment>
<proteinExistence type="inferred from homology"/>
<name>EX7L_SHESA</name>
<feature type="chain" id="PRO_0000303818" description="Exodeoxyribonuclease 7 large subunit">
    <location>
        <begin position="1"/>
        <end position="448"/>
    </location>
</feature>
<accession>A0KUK0</accession>
<keyword id="KW-0963">Cytoplasm</keyword>
<keyword id="KW-0269">Exonuclease</keyword>
<keyword id="KW-0378">Hydrolase</keyword>
<keyword id="KW-0540">Nuclease</keyword>
<dbReference type="EC" id="3.1.11.6" evidence="1"/>
<dbReference type="EMBL" id="CP000469">
    <property type="protein sequence ID" value="ABK47469.1"/>
    <property type="molecule type" value="Genomic_DNA"/>
</dbReference>
<dbReference type="RefSeq" id="WP_011716316.1">
    <property type="nucleotide sequence ID" value="NC_008577.1"/>
</dbReference>
<dbReference type="SMR" id="A0KUK0"/>
<dbReference type="STRING" id="94122.Shewana3_1234"/>
<dbReference type="KEGG" id="shn:Shewana3_1234"/>
<dbReference type="eggNOG" id="COG1570">
    <property type="taxonomic scope" value="Bacteria"/>
</dbReference>
<dbReference type="HOGENOM" id="CLU_023625_3_1_6"/>
<dbReference type="OrthoDB" id="9802795at2"/>
<dbReference type="Proteomes" id="UP000002589">
    <property type="component" value="Chromosome"/>
</dbReference>
<dbReference type="GO" id="GO:0005737">
    <property type="term" value="C:cytoplasm"/>
    <property type="evidence" value="ECO:0007669"/>
    <property type="project" value="UniProtKB-SubCell"/>
</dbReference>
<dbReference type="GO" id="GO:0009318">
    <property type="term" value="C:exodeoxyribonuclease VII complex"/>
    <property type="evidence" value="ECO:0007669"/>
    <property type="project" value="InterPro"/>
</dbReference>
<dbReference type="GO" id="GO:0008855">
    <property type="term" value="F:exodeoxyribonuclease VII activity"/>
    <property type="evidence" value="ECO:0007669"/>
    <property type="project" value="UniProtKB-UniRule"/>
</dbReference>
<dbReference type="GO" id="GO:0003676">
    <property type="term" value="F:nucleic acid binding"/>
    <property type="evidence" value="ECO:0007669"/>
    <property type="project" value="InterPro"/>
</dbReference>
<dbReference type="GO" id="GO:0006308">
    <property type="term" value="P:DNA catabolic process"/>
    <property type="evidence" value="ECO:0007669"/>
    <property type="project" value="UniProtKB-UniRule"/>
</dbReference>
<dbReference type="CDD" id="cd04489">
    <property type="entry name" value="ExoVII_LU_OBF"/>
    <property type="match status" value="1"/>
</dbReference>
<dbReference type="HAMAP" id="MF_00378">
    <property type="entry name" value="Exonuc_7_L"/>
    <property type="match status" value="1"/>
</dbReference>
<dbReference type="InterPro" id="IPR003753">
    <property type="entry name" value="Exonuc_VII_L"/>
</dbReference>
<dbReference type="InterPro" id="IPR020579">
    <property type="entry name" value="Exonuc_VII_lsu_C"/>
</dbReference>
<dbReference type="InterPro" id="IPR025824">
    <property type="entry name" value="OB-fold_nuc-bd_dom"/>
</dbReference>
<dbReference type="NCBIfam" id="TIGR00237">
    <property type="entry name" value="xseA"/>
    <property type="match status" value="1"/>
</dbReference>
<dbReference type="PANTHER" id="PTHR30008">
    <property type="entry name" value="EXODEOXYRIBONUCLEASE 7 LARGE SUBUNIT"/>
    <property type="match status" value="1"/>
</dbReference>
<dbReference type="PANTHER" id="PTHR30008:SF0">
    <property type="entry name" value="EXODEOXYRIBONUCLEASE 7 LARGE SUBUNIT"/>
    <property type="match status" value="1"/>
</dbReference>
<dbReference type="Pfam" id="PF02601">
    <property type="entry name" value="Exonuc_VII_L"/>
    <property type="match status" value="1"/>
</dbReference>
<dbReference type="Pfam" id="PF13742">
    <property type="entry name" value="tRNA_anti_2"/>
    <property type="match status" value="1"/>
</dbReference>